<reference key="1">
    <citation type="journal article" date="2012" name="Dev. Biol.">
        <title>Xenopus laevis zygote arrest 2 (zar2) encodes a zinc finger RNA-binding protein that binds to the translational control sequence in the maternal Wee1 mRNA and regulates translation.</title>
        <authorList>
            <person name="Charlesworth A."/>
            <person name="Yamamoto T.M."/>
            <person name="Cook J.M."/>
            <person name="Silva K.D."/>
            <person name="Kotter C.V."/>
            <person name="Carter G.S."/>
            <person name="Holt J.W."/>
            <person name="Lavender H.F."/>
            <person name="MacNicol A.M."/>
            <person name="Ying Wang Y."/>
            <person name="Wilczynska A."/>
        </authorList>
    </citation>
    <scope>NUCLEOTIDE SEQUENCE [MRNA]</scope>
    <scope>FUNCTION</scope>
    <scope>TISSUE SPECIFICITY</scope>
    <scope>DOMAIN</scope>
    <scope>MUTAGENESIS OF CYS-215; CYS-242; CYS-259 AND CYS-287</scope>
</reference>
<reference key="2">
    <citation type="journal article" date="2016" name="Nature">
        <title>Genome evolution in the allotetraploid frog Xenopus laevis.</title>
        <authorList>
            <person name="Session A.M."/>
            <person name="Uno Y."/>
            <person name="Kwon T."/>
            <person name="Chapman J.A."/>
            <person name="Toyoda A."/>
            <person name="Takahashi S."/>
            <person name="Fukui A."/>
            <person name="Hikosaka A."/>
            <person name="Suzuki A."/>
            <person name="Kondo M."/>
            <person name="van Heeringen S.J."/>
            <person name="Quigley I."/>
            <person name="Heinz S."/>
            <person name="Ogino H."/>
            <person name="Ochi H."/>
            <person name="Hellsten U."/>
            <person name="Lyons J.B."/>
            <person name="Simakov O."/>
            <person name="Putnam N."/>
            <person name="Stites J."/>
            <person name="Kuroki Y."/>
            <person name="Tanaka T."/>
            <person name="Michiue T."/>
            <person name="Watanabe M."/>
            <person name="Bogdanovic O."/>
            <person name="Lister R."/>
            <person name="Georgiou G."/>
            <person name="Paranjpe S.S."/>
            <person name="van Kruijsbergen I."/>
            <person name="Shu S."/>
            <person name="Carlson J."/>
            <person name="Kinoshita T."/>
            <person name="Ohta Y."/>
            <person name="Mawaribuchi S."/>
            <person name="Jenkins J."/>
            <person name="Grimwood J."/>
            <person name="Schmutz J."/>
            <person name="Mitros T."/>
            <person name="Mozaffari S.V."/>
            <person name="Suzuki Y."/>
            <person name="Haramoto Y."/>
            <person name="Yamamoto T.S."/>
            <person name="Takagi C."/>
            <person name="Heald R."/>
            <person name="Miller K."/>
            <person name="Haudenschild C."/>
            <person name="Kitzman J."/>
            <person name="Nakayama T."/>
            <person name="Izutsu Y."/>
            <person name="Robert J."/>
            <person name="Fortriede J."/>
            <person name="Burns K."/>
            <person name="Lotay V."/>
            <person name="Karimi K."/>
            <person name="Yasuoka Y."/>
            <person name="Dichmann D.S."/>
            <person name="Flajnik M.F."/>
            <person name="Houston D.W."/>
            <person name="Shendure J."/>
            <person name="DuPasquier L."/>
            <person name="Vize P.D."/>
            <person name="Zorn A.M."/>
            <person name="Ito M."/>
            <person name="Marcotte E.M."/>
            <person name="Wallingford J.B."/>
            <person name="Ito Y."/>
            <person name="Asashima M."/>
            <person name="Ueno N."/>
            <person name="Matsuda Y."/>
            <person name="Veenstra G.J."/>
            <person name="Fujiyama A."/>
            <person name="Harland R.M."/>
            <person name="Taira M."/>
            <person name="Rokhsar D.S."/>
        </authorList>
    </citation>
    <scope>NUCLEOTIDE SEQUENCE [LARGE SCALE GENOMIC DNA]</scope>
    <source>
        <strain>J</strain>
    </source>
</reference>
<dbReference type="EMBL" id="JQ776638">
    <property type="protein sequence ID" value="AFV95054.1"/>
    <property type="molecule type" value="mRNA"/>
</dbReference>
<dbReference type="EMBL" id="CM004468">
    <property type="status" value="NOT_ANNOTATED_CDS"/>
    <property type="molecule type" value="Genomic_DNA"/>
</dbReference>
<dbReference type="RefSeq" id="XP_018103181.1">
    <property type="nucleotide sequence ID" value="XM_018247692.1"/>
</dbReference>
<dbReference type="PaxDb" id="8355-A0A1L8HIW5"/>
<dbReference type="GeneID" id="108708693"/>
<dbReference type="KEGG" id="xla:108708693"/>
<dbReference type="AGR" id="Xenbase:XB-GENE-18005852"/>
<dbReference type="CTD" id="108708693"/>
<dbReference type="Xenbase" id="XB-GENE-18005852">
    <property type="gene designation" value="zar1l.L"/>
</dbReference>
<dbReference type="OMA" id="WCISGTC"/>
<dbReference type="OrthoDB" id="9885288at2759"/>
<dbReference type="Proteomes" id="UP000186698">
    <property type="component" value="Chromosome 2L"/>
</dbReference>
<dbReference type="Proteomes" id="UP000694892">
    <property type="component" value="Chromosome 2L"/>
</dbReference>
<dbReference type="Bgee" id="108708693">
    <property type="expression patterns" value="Expressed in oocyte and 9 other cell types or tissues"/>
</dbReference>
<dbReference type="GO" id="GO:0005737">
    <property type="term" value="C:cytoplasm"/>
    <property type="evidence" value="ECO:0000318"/>
    <property type="project" value="GO_Central"/>
</dbReference>
<dbReference type="GO" id="GO:0036464">
    <property type="term" value="C:cytoplasmic ribonucleoprotein granule"/>
    <property type="evidence" value="ECO:0007669"/>
    <property type="project" value="UniProtKB-SubCell"/>
</dbReference>
<dbReference type="GO" id="GO:0003730">
    <property type="term" value="F:mRNA 3'-UTR binding"/>
    <property type="evidence" value="ECO:0000314"/>
    <property type="project" value="UniProtKB"/>
</dbReference>
<dbReference type="GO" id="GO:0008270">
    <property type="term" value="F:zinc ion binding"/>
    <property type="evidence" value="ECO:0007669"/>
    <property type="project" value="UniProtKB-KW"/>
</dbReference>
<dbReference type="GO" id="GO:0017148">
    <property type="term" value="P:negative regulation of translation"/>
    <property type="evidence" value="ECO:0000314"/>
    <property type="project" value="UniProtKB"/>
</dbReference>
<dbReference type="GO" id="GO:0001556">
    <property type="term" value="P:oocyte maturation"/>
    <property type="evidence" value="ECO:0000314"/>
    <property type="project" value="UniProtKB"/>
</dbReference>
<dbReference type="GO" id="GO:0006412">
    <property type="term" value="P:translation"/>
    <property type="evidence" value="ECO:0000318"/>
    <property type="project" value="GO_Central"/>
</dbReference>
<dbReference type="InterPro" id="IPR026775">
    <property type="entry name" value="Zar1"/>
</dbReference>
<dbReference type="InterPro" id="IPR027377">
    <property type="entry name" value="ZAR1/RTP1-5-like_Znf-3CxxC"/>
</dbReference>
<dbReference type="PANTHER" id="PTHR31054:SF5">
    <property type="entry name" value="PROTEIN ZAR1-LIKE"/>
    <property type="match status" value="1"/>
</dbReference>
<dbReference type="PANTHER" id="PTHR31054">
    <property type="entry name" value="ZYGOTE ARREST PROTEIN 1-LIKE ISOFORM X1"/>
    <property type="match status" value="1"/>
</dbReference>
<dbReference type="Pfam" id="PF13695">
    <property type="entry name" value="Zn_ribbon_3CxxC"/>
    <property type="match status" value="1"/>
</dbReference>
<dbReference type="SMART" id="SM01328">
    <property type="entry name" value="zf-3CxxC"/>
    <property type="match status" value="1"/>
</dbReference>
<accession>K7SGN7</accession>
<accession>A0A1L8HIW5</accession>
<feature type="chain" id="PRO_0000457522" description="Zygote arrest protein 2.L">
    <location>
        <begin position="1"/>
        <end position="307"/>
    </location>
</feature>
<feature type="zinc finger region" description="3CxxC-type" evidence="3">
    <location>
        <begin position="208"/>
        <end position="293"/>
    </location>
</feature>
<feature type="region of interest" description="Disordered" evidence="4">
    <location>
        <begin position="138"/>
        <end position="200"/>
    </location>
</feature>
<feature type="compositionally biased region" description="Basic and acidic residues" evidence="4">
    <location>
        <begin position="156"/>
        <end position="186"/>
    </location>
</feature>
<feature type="mutagenesis site" description="Abolished binding to the 3'-UTR of mRNAs." evidence="5">
    <original>C</original>
    <variation>A</variation>
    <location>
        <position position="215"/>
    </location>
</feature>
<feature type="mutagenesis site" description="Abolished binding to the 3'-UTR of mRNAs." evidence="5">
    <original>C</original>
    <variation>A</variation>
    <location>
        <position position="242"/>
    </location>
</feature>
<feature type="mutagenesis site" description="Abolished binding to the 3'-UTR of mRNAs." evidence="5">
    <original>C</original>
    <variation>A</variation>
    <location>
        <position position="259"/>
    </location>
</feature>
<feature type="mutagenesis site" description="Abolished binding to the 3'-UTR of mRNAs." evidence="5">
    <original>C</original>
    <variation>A</variation>
    <location>
        <position position="287"/>
    </location>
</feature>
<feature type="sequence conflict" description="In Ref. 1; AFV95054." evidence="8" ref="1">
    <original>Y</original>
    <variation>F</variation>
    <location>
        <position position="249"/>
    </location>
</feature>
<protein>
    <recommendedName>
        <fullName evidence="8">Zygote arrest protein 2.L</fullName>
    </recommendedName>
    <alternativeName>
        <fullName evidence="7">Protein A8</fullName>
    </alternativeName>
    <alternativeName>
        <fullName evidence="6">Zygote arrest protein 2B</fullName>
    </alternativeName>
</protein>
<evidence type="ECO:0000250" key="1">
    <source>
        <dbReference type="UniProtKB" id="C3VD30"/>
    </source>
</evidence>
<evidence type="ECO:0000250" key="2">
    <source>
        <dbReference type="UniProtKB" id="Q80SU3"/>
    </source>
</evidence>
<evidence type="ECO:0000255" key="3"/>
<evidence type="ECO:0000256" key="4">
    <source>
        <dbReference type="SAM" id="MobiDB-lite"/>
    </source>
</evidence>
<evidence type="ECO:0000269" key="5">
    <source>
    </source>
</evidence>
<evidence type="ECO:0000303" key="6">
    <source>
    </source>
</evidence>
<evidence type="ECO:0000303" key="7">
    <source>
    </source>
</evidence>
<evidence type="ECO:0000305" key="8"/>
<comment type="function">
    <text evidence="2 5">mRNA-binding protein required for maternal mRNA storage, translation and degradation during oocyte maturation (PubMed:22732570). Probably promotes formation of some phase-separated membraneless compartment that stores maternal mRNAs in oocytes: acts by undergoing liquid-liquid phase separation upon binding to maternal mRNAs (By similarity). Binds to the 3'-UTR of maternal mRNAs, inhibiting their translation (PubMed:22732570).</text>
</comment>
<comment type="subcellular location">
    <subcellularLocation>
        <location evidence="1">Cytoplasm</location>
        <location evidence="1">Cytoplasmic ribonucleoprotein granule</location>
    </subcellularLocation>
</comment>
<comment type="tissue specificity">
    <text evidence="5">Expressed in oocytes.</text>
</comment>
<comment type="developmental stage">
    <text evidence="5">In oocytes, expressed during meiotic maturation (PubMed:22732570). Levels gradually decrease during oocyte maturation (at protein level) (PubMed:22732570).</text>
</comment>
<comment type="domain">
    <text evidence="2">Disordered regions undergo liquid-liquid phase separation (LLPS) for the formation of membraneless compartments that store maternal mRNAs in oocytes.</text>
</comment>
<comment type="domain">
    <text evidence="5">The 3CxxC-type mediates binding to the 3'-UTR of mRNAs.</text>
</comment>
<comment type="similarity">
    <text evidence="8">Belongs to the ZAR1 family.</text>
</comment>
<sequence length="307" mass="35125">MAGFMYAPYNVYQGYGGNFGQNPHVAQPLAKNKQAAWKSNKASEPTDYLDNFQRAQLKAILSQVNPNLTPRLRKANTKEIGVQVNPRVDTGVQCSLGPRTLRRPPPPPCSPVKAADCVRFTRPLAVYSPVVDRRLFSLPQGGRLPKKSPDSQSQPLKERAPSPEDKEREKVSEKEPDTKDELEKRPVPGTEEPGNEEQTKSAFQFLEQKYGYFHCKDCKTRWESAYVWCISGSNKVYFKQLCRKCQKGYNPYRVEAIQCQVCAKTRCSCPQKQRHIDLKRPHRQELCGRCKNKRLSCDNTYSYKYIV</sequence>
<organism>
    <name type="scientific">Xenopus laevis</name>
    <name type="common">African clawed frog</name>
    <dbReference type="NCBI Taxonomy" id="8355"/>
    <lineage>
        <taxon>Eukaryota</taxon>
        <taxon>Metazoa</taxon>
        <taxon>Chordata</taxon>
        <taxon>Craniata</taxon>
        <taxon>Vertebrata</taxon>
        <taxon>Euteleostomi</taxon>
        <taxon>Amphibia</taxon>
        <taxon>Batrachia</taxon>
        <taxon>Anura</taxon>
        <taxon>Pipoidea</taxon>
        <taxon>Pipidae</taxon>
        <taxon>Xenopodinae</taxon>
        <taxon>Xenopus</taxon>
        <taxon>Xenopus</taxon>
    </lineage>
</organism>
<keyword id="KW-0963">Cytoplasm</keyword>
<keyword id="KW-0217">Developmental protein</keyword>
<keyword id="KW-0221">Differentiation</keyword>
<keyword id="KW-0479">Metal-binding</keyword>
<keyword id="KW-0896">Oogenesis</keyword>
<keyword id="KW-1185">Reference proteome</keyword>
<keyword id="KW-0694">RNA-binding</keyword>
<keyword id="KW-0862">Zinc</keyword>
<keyword id="KW-0863">Zinc-finger</keyword>
<proteinExistence type="evidence at protein level"/>
<gene>
    <name type="primary">zar2.L</name>
    <name evidence="6" type="synonym">zar2b</name>
</gene>
<name>ZAR2B_XENLA</name>